<organism>
    <name type="scientific">Canis lupus familiaris</name>
    <name type="common">Dog</name>
    <name type="synonym">Canis familiaris</name>
    <dbReference type="NCBI Taxonomy" id="9615"/>
    <lineage>
        <taxon>Eukaryota</taxon>
        <taxon>Metazoa</taxon>
        <taxon>Chordata</taxon>
        <taxon>Craniata</taxon>
        <taxon>Vertebrata</taxon>
        <taxon>Euteleostomi</taxon>
        <taxon>Mammalia</taxon>
        <taxon>Eutheria</taxon>
        <taxon>Laurasiatheria</taxon>
        <taxon>Carnivora</taxon>
        <taxon>Caniformia</taxon>
        <taxon>Canidae</taxon>
        <taxon>Canis</taxon>
    </lineage>
</organism>
<sequence>MELLKLNRSAQGSGAGPGASLCRAGGALLNSSGAGNLSCEPPRLRGAGTRELELAIRVTLYAVIFLMSVGGNVLIIVVLGLSRRLRTVTNAFLLSLAVSDLLLAVACMPFTLLPNLMGTFIFGTVVCKAVSYLMGVSVSVSTLSLVAIALERYSAICRPLQARVWQTRSHAARVIIATWMLSGLLMVPYPVYTAVQPAGGARALQCVHRWPSARVRQTWSVLLLLLLFFVPGVVMAVAYGLISRELYLGLRFDEDSDSESRVRSQGGLRGGAGPGPAPPNGSCRPEGGLAGEDGDGCYVQLPRSRQTLELSALTAPTPGPGGGPRPYQAKLLAKKRVVRMLLVIVVLFFLCWLPLYSANTWRAFDSSGAHRALSGAPISFIHLLSYASACVNPLVYCFMHRRFRQACLETCARCCPRPPRARPRPLPDEDPPTPSIASLSRLSYTTISTLGPG</sequence>
<gene>
    <name type="primary">CCKBR</name>
</gene>
<comment type="function">
    <text>Receptor for gastrin and cholecystokinin. The CCK-B receptors occur throughout the central nervous system where they modulate anxiety, analgesia, arousal, and neuroleptic activity. This receptor mediates its action by association with G proteins that activate a phosphatidylinositol-calcium second messenger system.</text>
</comment>
<comment type="subcellular location">
    <subcellularLocation>
        <location>Cell membrane</location>
        <topology>Multi-pass membrane protein</topology>
    </subcellularLocation>
</comment>
<comment type="tissue specificity">
    <text>Parietal cells, pancreas, brain and various neoplastic tissues.</text>
</comment>
<comment type="similarity">
    <text evidence="3">Belongs to the G-protein coupled receptor 1 family.</text>
</comment>
<evidence type="ECO:0000250" key="1">
    <source>
        <dbReference type="UniProtKB" id="P17124"/>
    </source>
</evidence>
<evidence type="ECO:0000255" key="2"/>
<evidence type="ECO:0000255" key="3">
    <source>
        <dbReference type="PROSITE-ProRule" id="PRU00521"/>
    </source>
</evidence>
<evidence type="ECO:0000256" key="4">
    <source>
        <dbReference type="SAM" id="MobiDB-lite"/>
    </source>
</evidence>
<reference key="1">
    <citation type="journal article" date="1992" name="Proc. Natl. Acad. Sci. U.S.A.">
        <title>Expression cloning and characterization of the canine parietal cell gastrin receptor.</title>
        <authorList>
            <person name="Kopin A.S."/>
            <person name="Lee Y.-M."/>
            <person name="McBride E.W."/>
            <person name="Miller L.J."/>
            <person name="Lu M."/>
            <person name="Lin H.Y."/>
            <person name="Kolakowski L.F. Jr."/>
            <person name="Beinborn M."/>
        </authorList>
    </citation>
    <scope>NUCLEOTIDE SEQUENCE [MRNA]</scope>
    <source>
        <tissue>Gastric parietal cell</tissue>
    </source>
</reference>
<reference key="2">
    <citation type="submission" date="1997-12" db="EMBL/GenBank/DDBJ databases">
        <title>Molecular cloning and structural analysis of the canine gastrin/CCK-B receptor gene.</title>
        <authorList>
            <person name="Song I."/>
            <person name="Blandizzi C."/>
            <person name="Brown D.R."/>
            <person name="Kang D.H."/>
            <person name="Todisco A."/>
            <person name="Delvalle J."/>
            <person name="del Tacca M."/>
            <person name="Owyang C."/>
            <person name="Yamada T."/>
        </authorList>
    </citation>
    <scope>NUCLEOTIDE SEQUENCE [GENOMIC DNA]</scope>
</reference>
<feature type="chain" id="PRO_0000069473" description="Gastrin/cholecystokinin type B receptor">
    <location>
        <begin position="1"/>
        <end position="453"/>
    </location>
</feature>
<feature type="topological domain" description="Extracellular" evidence="2">
    <location>
        <begin position="1"/>
        <end position="57"/>
    </location>
</feature>
<feature type="transmembrane region" description="Helical; Name=1" evidence="2">
    <location>
        <begin position="58"/>
        <end position="79"/>
    </location>
</feature>
<feature type="topological domain" description="Cytoplasmic" evidence="2">
    <location>
        <begin position="80"/>
        <end position="87"/>
    </location>
</feature>
<feature type="transmembrane region" description="Helical; Name=2" evidence="2">
    <location>
        <begin position="88"/>
        <end position="109"/>
    </location>
</feature>
<feature type="topological domain" description="Extracellular" evidence="2">
    <location>
        <begin position="110"/>
        <end position="131"/>
    </location>
</feature>
<feature type="transmembrane region" description="Helical; Name=3" evidence="2">
    <location>
        <begin position="132"/>
        <end position="150"/>
    </location>
</feature>
<feature type="topological domain" description="Cytoplasmic" evidence="2">
    <location>
        <begin position="151"/>
        <end position="170"/>
    </location>
</feature>
<feature type="transmembrane region" description="Helical; Name=4" evidence="2">
    <location>
        <begin position="171"/>
        <end position="189"/>
    </location>
</feature>
<feature type="topological domain" description="Extracellular" evidence="2">
    <location>
        <begin position="190"/>
        <end position="220"/>
    </location>
</feature>
<feature type="transmembrane region" description="Helical; Name=5" evidence="2">
    <location>
        <begin position="221"/>
        <end position="243"/>
    </location>
</feature>
<feature type="topological domain" description="Cytoplasmic" evidence="2">
    <location>
        <begin position="244"/>
        <end position="339"/>
    </location>
</feature>
<feature type="transmembrane region" description="Helical; Name=6" evidence="2">
    <location>
        <begin position="340"/>
        <end position="361"/>
    </location>
</feature>
<feature type="topological domain" description="Extracellular" evidence="2">
    <location>
        <begin position="362"/>
        <end position="379"/>
    </location>
</feature>
<feature type="transmembrane region" description="Helical; Name=7" evidence="2">
    <location>
        <begin position="380"/>
        <end position="400"/>
    </location>
</feature>
<feature type="topological domain" description="Cytoplasmic" evidence="2">
    <location>
        <begin position="401"/>
        <end position="453"/>
    </location>
</feature>
<feature type="region of interest" description="Disordered" evidence="4">
    <location>
        <begin position="258"/>
        <end position="286"/>
    </location>
</feature>
<feature type="region of interest" description="Disordered" evidence="4">
    <location>
        <begin position="422"/>
        <end position="453"/>
    </location>
</feature>
<feature type="compositionally biased region" description="Polar residues" evidence="4">
    <location>
        <begin position="435"/>
        <end position="453"/>
    </location>
</feature>
<feature type="lipid moiety-binding region" description="S-palmitoyl cysteine" evidence="1">
    <location>
        <position position="414"/>
    </location>
</feature>
<feature type="glycosylation site" description="N-linked (GlcNAc...) asparagine" evidence="2">
    <location>
        <position position="7"/>
    </location>
</feature>
<feature type="glycosylation site" description="N-linked (GlcNAc...) asparagine" evidence="2">
    <location>
        <position position="30"/>
    </location>
</feature>
<feature type="glycosylation site" description="N-linked (GlcNAc...) asparagine" evidence="2">
    <location>
        <position position="36"/>
    </location>
</feature>
<feature type="disulfide bond" evidence="3">
    <location>
        <begin position="127"/>
        <end position="206"/>
    </location>
</feature>
<keyword id="KW-1003">Cell membrane</keyword>
<keyword id="KW-1015">Disulfide bond</keyword>
<keyword id="KW-0297">G-protein coupled receptor</keyword>
<keyword id="KW-0325">Glycoprotein</keyword>
<keyword id="KW-0449">Lipoprotein</keyword>
<keyword id="KW-0472">Membrane</keyword>
<keyword id="KW-0564">Palmitate</keyword>
<keyword id="KW-0675">Receptor</keyword>
<keyword id="KW-1185">Reference proteome</keyword>
<keyword id="KW-0807">Transducer</keyword>
<keyword id="KW-0812">Transmembrane</keyword>
<keyword id="KW-1133">Transmembrane helix</keyword>
<name>GASR_CANLF</name>
<dbReference type="EMBL" id="M87834">
    <property type="protein sequence ID" value="AAA30847.1"/>
    <property type="molecule type" value="mRNA"/>
</dbReference>
<dbReference type="EMBL" id="AD001537">
    <property type="protein sequence ID" value="AAB87706.1"/>
    <property type="molecule type" value="Genomic_DNA"/>
</dbReference>
<dbReference type="PIR" id="S32817">
    <property type="entry name" value="S32817"/>
</dbReference>
<dbReference type="RefSeq" id="NP_001013868.1">
    <property type="nucleotide sequence ID" value="NM_001013846.1"/>
</dbReference>
<dbReference type="RefSeq" id="XP_038286275.1">
    <property type="nucleotide sequence ID" value="XM_038430347.1"/>
</dbReference>
<dbReference type="RefSeq" id="XP_038312401.1">
    <property type="nucleotide sequence ID" value="XM_038456473.1"/>
</dbReference>
<dbReference type="RefSeq" id="XP_038424810.1">
    <property type="nucleotide sequence ID" value="XM_038568882.1"/>
</dbReference>
<dbReference type="SMR" id="P30552"/>
<dbReference type="FunCoup" id="P30552">
    <property type="interactions" value="100"/>
</dbReference>
<dbReference type="STRING" id="9615.ENSCAFP00000009585"/>
<dbReference type="BindingDB" id="P30552"/>
<dbReference type="ChEMBL" id="CHEMBL5595"/>
<dbReference type="GlyCosmos" id="P30552">
    <property type="glycosylation" value="3 sites, No reported glycans"/>
</dbReference>
<dbReference type="Ensembl" id="ENSCAFT00000104931.1">
    <property type="protein sequence ID" value="ENSCAFP00000075359.1"/>
    <property type="gene ID" value="ENSCAFG00000006402.5"/>
</dbReference>
<dbReference type="Ensembl" id="ENSCAFT00030017531.1">
    <property type="protein sequence ID" value="ENSCAFP00030015312.1"/>
    <property type="gene ID" value="ENSCAFG00030009352.1"/>
</dbReference>
<dbReference type="Ensembl" id="ENSCAFT00040034737.1">
    <property type="protein sequence ID" value="ENSCAFP00040030249.1"/>
    <property type="gene ID" value="ENSCAFG00040018649.1"/>
</dbReference>
<dbReference type="Ensembl" id="ENSCAFT00845012829.1">
    <property type="protein sequence ID" value="ENSCAFP00845009998.1"/>
    <property type="gene ID" value="ENSCAFG00845007238.1"/>
</dbReference>
<dbReference type="GeneID" id="485333"/>
<dbReference type="VEuPathDB" id="HostDB:ENSCAFG00845007238"/>
<dbReference type="VGNC" id="VGNC:58286">
    <property type="gene designation" value="CCKBR"/>
</dbReference>
<dbReference type="GeneTree" id="ENSGT01130000278338"/>
<dbReference type="InParanoid" id="P30552"/>
<dbReference type="OrthoDB" id="5987936at2759"/>
<dbReference type="Reactome" id="R-CFA-375276">
    <property type="pathway name" value="Peptide ligand-binding receptors"/>
</dbReference>
<dbReference type="Reactome" id="R-CFA-416476">
    <property type="pathway name" value="G alpha (q) signalling events"/>
</dbReference>
<dbReference type="Reactome" id="R-CFA-881907">
    <property type="pathway name" value="Gastrin-CREB signalling pathway via PKC and MAPK"/>
</dbReference>
<dbReference type="PRO" id="PR:P30552"/>
<dbReference type="Proteomes" id="UP000002254">
    <property type="component" value="Chromosome 21"/>
</dbReference>
<dbReference type="Proteomes" id="UP000694429">
    <property type="component" value="Chromosome 21"/>
</dbReference>
<dbReference type="Proteomes" id="UP000694542">
    <property type="component" value="Chromosome 21"/>
</dbReference>
<dbReference type="Proteomes" id="UP000805418">
    <property type="component" value="Chromosome 21"/>
</dbReference>
<dbReference type="GO" id="GO:0043231">
    <property type="term" value="C:intracellular membrane-bounded organelle"/>
    <property type="evidence" value="ECO:0007669"/>
    <property type="project" value="Ensembl"/>
</dbReference>
<dbReference type="GO" id="GO:0005886">
    <property type="term" value="C:plasma membrane"/>
    <property type="evidence" value="ECO:0007669"/>
    <property type="project" value="UniProtKB-SubCell"/>
</dbReference>
<dbReference type="GO" id="GO:0004951">
    <property type="term" value="F:cholecystokinin receptor activity"/>
    <property type="evidence" value="ECO:0007669"/>
    <property type="project" value="Ensembl"/>
</dbReference>
<dbReference type="GO" id="GO:0015054">
    <property type="term" value="F:gastrin receptor activity"/>
    <property type="evidence" value="ECO:0000250"/>
    <property type="project" value="UniProtKB"/>
</dbReference>
<dbReference type="GO" id="GO:0017046">
    <property type="term" value="F:peptide hormone binding"/>
    <property type="evidence" value="ECO:0007669"/>
    <property type="project" value="Ensembl"/>
</dbReference>
<dbReference type="GO" id="GO:0031741">
    <property type="term" value="F:type B gastrin/cholecystokinin receptor binding"/>
    <property type="evidence" value="ECO:0007669"/>
    <property type="project" value="Ensembl"/>
</dbReference>
<dbReference type="GO" id="GO:0048565">
    <property type="term" value="P:digestive tract development"/>
    <property type="evidence" value="ECO:0007669"/>
    <property type="project" value="Ensembl"/>
</dbReference>
<dbReference type="GO" id="GO:0001696">
    <property type="term" value="P:gastric acid secretion"/>
    <property type="evidence" value="ECO:0007669"/>
    <property type="project" value="Ensembl"/>
</dbReference>
<dbReference type="GO" id="GO:0048732">
    <property type="term" value="P:gland development"/>
    <property type="evidence" value="ECO:0007669"/>
    <property type="project" value="Ensembl"/>
</dbReference>
<dbReference type="GO" id="GO:0045851">
    <property type="term" value="P:pH reduction"/>
    <property type="evidence" value="ECO:0007669"/>
    <property type="project" value="Ensembl"/>
</dbReference>
<dbReference type="GO" id="GO:0007200">
    <property type="term" value="P:phospholipase C-activating G protein-coupled receptor signaling pathway"/>
    <property type="evidence" value="ECO:0007669"/>
    <property type="project" value="Ensembl"/>
</dbReference>
<dbReference type="GO" id="GO:0008284">
    <property type="term" value="P:positive regulation of cell population proliferation"/>
    <property type="evidence" value="ECO:0000250"/>
    <property type="project" value="UniProtKB"/>
</dbReference>
<dbReference type="GO" id="GO:0007204">
    <property type="term" value="P:positive regulation of cytosolic calcium ion concentration"/>
    <property type="evidence" value="ECO:0000250"/>
    <property type="project" value="UniProtKB"/>
</dbReference>
<dbReference type="Gene3D" id="1.20.1070.10">
    <property type="entry name" value="Rhodopsin 7-helix transmembrane proteins"/>
    <property type="match status" value="1"/>
</dbReference>
<dbReference type="InterPro" id="IPR009126">
    <property type="entry name" value="Cholcskin_rcpt"/>
</dbReference>
<dbReference type="InterPro" id="IPR000314">
    <property type="entry name" value="Gastrin_rcpt"/>
</dbReference>
<dbReference type="InterPro" id="IPR000276">
    <property type="entry name" value="GPCR_Rhodpsn"/>
</dbReference>
<dbReference type="InterPro" id="IPR017452">
    <property type="entry name" value="GPCR_Rhodpsn_7TM"/>
</dbReference>
<dbReference type="PANTHER" id="PTHR24243">
    <property type="entry name" value="G-PROTEIN COUPLED RECEPTOR"/>
    <property type="match status" value="1"/>
</dbReference>
<dbReference type="PANTHER" id="PTHR24243:SF45">
    <property type="entry name" value="GASTRIN_CHOLECYSTOKININ TYPE B RECEPTOR"/>
    <property type="match status" value="1"/>
</dbReference>
<dbReference type="Pfam" id="PF00001">
    <property type="entry name" value="7tm_1"/>
    <property type="match status" value="1"/>
</dbReference>
<dbReference type="PRINTS" id="PR01822">
    <property type="entry name" value="CCYSTOKININR"/>
</dbReference>
<dbReference type="PRINTS" id="PR00527">
    <property type="entry name" value="GASTRINR"/>
</dbReference>
<dbReference type="PRINTS" id="PR00237">
    <property type="entry name" value="GPCRRHODOPSN"/>
</dbReference>
<dbReference type="SUPFAM" id="SSF81321">
    <property type="entry name" value="Family A G protein-coupled receptor-like"/>
    <property type="match status" value="1"/>
</dbReference>
<dbReference type="PROSITE" id="PS00237">
    <property type="entry name" value="G_PROTEIN_RECEP_F1_1"/>
    <property type="match status" value="1"/>
</dbReference>
<dbReference type="PROSITE" id="PS50262">
    <property type="entry name" value="G_PROTEIN_RECEP_F1_2"/>
    <property type="match status" value="1"/>
</dbReference>
<protein>
    <recommendedName>
        <fullName>Gastrin/cholecystokinin type B receptor</fullName>
        <shortName>CCK-B receptor</shortName>
        <shortName>CCK-BR</shortName>
    </recommendedName>
    <alternativeName>
        <fullName>Cholecystokinin-2 receptor</fullName>
        <shortName>CCK2-R</shortName>
    </alternativeName>
</protein>
<accession>P30552</accession>
<accession>O46376</accession>
<proteinExistence type="evidence at transcript level"/>